<dbReference type="EC" id="6.1.1.11" evidence="3"/>
<dbReference type="EMBL" id="X05017">
    <property type="protein sequence ID" value="CAA28673.1"/>
    <property type="molecule type" value="Genomic_DNA"/>
</dbReference>
<dbReference type="EMBL" id="U00096">
    <property type="protein sequence ID" value="AAC73979.1"/>
    <property type="molecule type" value="Genomic_DNA"/>
</dbReference>
<dbReference type="EMBL" id="AP009048">
    <property type="protein sequence ID" value="BAA35625.1"/>
    <property type="molecule type" value="Genomic_DNA"/>
</dbReference>
<dbReference type="EMBL" id="J03412">
    <property type="protein sequence ID" value="AAA83842.1"/>
    <property type="molecule type" value="Genomic_DNA"/>
</dbReference>
<dbReference type="PIR" id="A26400">
    <property type="entry name" value="YSEC"/>
</dbReference>
<dbReference type="RefSeq" id="NP_415413.1">
    <property type="nucleotide sequence ID" value="NC_000913.3"/>
</dbReference>
<dbReference type="RefSeq" id="WP_000886683.1">
    <property type="nucleotide sequence ID" value="NZ_STEB01000006.1"/>
</dbReference>
<dbReference type="PDB" id="6R1M">
    <property type="method" value="X-ray"/>
    <property type="resolution" value="1.50 A"/>
    <property type="chains" value="A/B=1-430"/>
</dbReference>
<dbReference type="PDB" id="6R1O">
    <property type="method" value="X-ray"/>
    <property type="resolution" value="2.60 A"/>
    <property type="chains" value="A=1-430"/>
</dbReference>
<dbReference type="PDBsum" id="6R1M"/>
<dbReference type="PDBsum" id="6R1O"/>
<dbReference type="SMR" id="P0A8L1"/>
<dbReference type="BioGRID" id="4261485">
    <property type="interactions" value="28"/>
</dbReference>
<dbReference type="BioGRID" id="849880">
    <property type="interactions" value="1"/>
</dbReference>
<dbReference type="DIP" id="DIP-35989N"/>
<dbReference type="FunCoup" id="P0A8L1">
    <property type="interactions" value="833"/>
</dbReference>
<dbReference type="IntAct" id="P0A8L1">
    <property type="interactions" value="16"/>
</dbReference>
<dbReference type="STRING" id="511145.b0893"/>
<dbReference type="BindingDB" id="P0A8L1"/>
<dbReference type="ChEMBL" id="CHEMBL4295569"/>
<dbReference type="jPOST" id="P0A8L1"/>
<dbReference type="PaxDb" id="511145-b0893"/>
<dbReference type="EnsemblBacteria" id="AAC73979">
    <property type="protein sequence ID" value="AAC73979"/>
    <property type="gene ID" value="b0893"/>
</dbReference>
<dbReference type="GeneID" id="93776527"/>
<dbReference type="GeneID" id="945506"/>
<dbReference type="KEGG" id="ecj:JW0876"/>
<dbReference type="KEGG" id="eco:b0893"/>
<dbReference type="KEGG" id="ecoc:C3026_05525"/>
<dbReference type="PATRIC" id="fig|1411691.4.peg.1384"/>
<dbReference type="EchoBASE" id="EB0940"/>
<dbReference type="eggNOG" id="COG0172">
    <property type="taxonomic scope" value="Bacteria"/>
</dbReference>
<dbReference type="HOGENOM" id="CLU_023797_1_1_6"/>
<dbReference type="InParanoid" id="P0A8L1"/>
<dbReference type="OMA" id="GYTPCFR"/>
<dbReference type="OrthoDB" id="9804647at2"/>
<dbReference type="PhylomeDB" id="P0A8L1"/>
<dbReference type="BioCyc" id="EcoCyc:SERS-MONOMER"/>
<dbReference type="BioCyc" id="MetaCyc:SERS-MONOMER"/>
<dbReference type="UniPathway" id="UPA00906">
    <property type="reaction ID" value="UER00895"/>
</dbReference>
<dbReference type="PRO" id="PR:P0A8L1"/>
<dbReference type="Proteomes" id="UP000000625">
    <property type="component" value="Chromosome"/>
</dbReference>
<dbReference type="GO" id="GO:0005829">
    <property type="term" value="C:cytosol"/>
    <property type="evidence" value="ECO:0000314"/>
    <property type="project" value="EcoCyc"/>
</dbReference>
<dbReference type="GO" id="GO:0005524">
    <property type="term" value="F:ATP binding"/>
    <property type="evidence" value="ECO:0007669"/>
    <property type="project" value="UniProtKB-UniRule"/>
</dbReference>
<dbReference type="GO" id="GO:0042802">
    <property type="term" value="F:identical protein binding"/>
    <property type="evidence" value="ECO:0000353"/>
    <property type="project" value="IntAct"/>
</dbReference>
<dbReference type="GO" id="GO:0000287">
    <property type="term" value="F:magnesium ion binding"/>
    <property type="evidence" value="ECO:0000314"/>
    <property type="project" value="EcoCyc"/>
</dbReference>
<dbReference type="GO" id="GO:0004828">
    <property type="term" value="F:serine-tRNA ligase activity"/>
    <property type="evidence" value="ECO:0000314"/>
    <property type="project" value="UniProtKB"/>
</dbReference>
<dbReference type="GO" id="GO:0016260">
    <property type="term" value="P:selenocysteine biosynthetic process"/>
    <property type="evidence" value="ECO:0000314"/>
    <property type="project" value="EcoCyc"/>
</dbReference>
<dbReference type="GO" id="GO:0006434">
    <property type="term" value="P:seryl-tRNA aminoacylation"/>
    <property type="evidence" value="ECO:0000314"/>
    <property type="project" value="UniProtKB"/>
</dbReference>
<dbReference type="CDD" id="cd00770">
    <property type="entry name" value="SerRS_core"/>
    <property type="match status" value="1"/>
</dbReference>
<dbReference type="FunFam" id="1.10.287.40:FF:000001">
    <property type="entry name" value="Serine--tRNA ligase"/>
    <property type="match status" value="1"/>
</dbReference>
<dbReference type="FunFam" id="3.30.930.10:FF:000018">
    <property type="entry name" value="Serine--tRNA ligase"/>
    <property type="match status" value="1"/>
</dbReference>
<dbReference type="Gene3D" id="3.30.930.10">
    <property type="entry name" value="Bira Bifunctional Protein, Domain 2"/>
    <property type="match status" value="1"/>
</dbReference>
<dbReference type="Gene3D" id="1.10.287.40">
    <property type="entry name" value="Serine-tRNA synthetase, tRNA binding domain"/>
    <property type="match status" value="1"/>
</dbReference>
<dbReference type="HAMAP" id="MF_00176">
    <property type="entry name" value="Ser_tRNA_synth_type1"/>
    <property type="match status" value="1"/>
</dbReference>
<dbReference type="InterPro" id="IPR002314">
    <property type="entry name" value="aa-tRNA-synt_IIb"/>
</dbReference>
<dbReference type="InterPro" id="IPR006195">
    <property type="entry name" value="aa-tRNA-synth_II"/>
</dbReference>
<dbReference type="InterPro" id="IPR045864">
    <property type="entry name" value="aa-tRNA-synth_II/BPL/LPL"/>
</dbReference>
<dbReference type="InterPro" id="IPR002317">
    <property type="entry name" value="Ser-tRNA-ligase_type_1"/>
</dbReference>
<dbReference type="InterPro" id="IPR015866">
    <property type="entry name" value="Ser-tRNA-synth_1_N"/>
</dbReference>
<dbReference type="InterPro" id="IPR042103">
    <property type="entry name" value="SerRS_1_N_sf"/>
</dbReference>
<dbReference type="InterPro" id="IPR033729">
    <property type="entry name" value="SerRS_core"/>
</dbReference>
<dbReference type="InterPro" id="IPR010978">
    <property type="entry name" value="tRNA-bd_arm"/>
</dbReference>
<dbReference type="NCBIfam" id="TIGR00414">
    <property type="entry name" value="serS"/>
    <property type="match status" value="1"/>
</dbReference>
<dbReference type="PANTHER" id="PTHR43697:SF1">
    <property type="entry name" value="SERINE--TRNA LIGASE"/>
    <property type="match status" value="1"/>
</dbReference>
<dbReference type="PANTHER" id="PTHR43697">
    <property type="entry name" value="SERYL-TRNA SYNTHETASE"/>
    <property type="match status" value="1"/>
</dbReference>
<dbReference type="Pfam" id="PF02403">
    <property type="entry name" value="Seryl_tRNA_N"/>
    <property type="match status" value="1"/>
</dbReference>
<dbReference type="Pfam" id="PF00587">
    <property type="entry name" value="tRNA-synt_2b"/>
    <property type="match status" value="1"/>
</dbReference>
<dbReference type="PIRSF" id="PIRSF001529">
    <property type="entry name" value="Ser-tRNA-synth_IIa"/>
    <property type="match status" value="1"/>
</dbReference>
<dbReference type="PRINTS" id="PR00981">
    <property type="entry name" value="TRNASYNTHSER"/>
</dbReference>
<dbReference type="SUPFAM" id="SSF55681">
    <property type="entry name" value="Class II aaRS and biotin synthetases"/>
    <property type="match status" value="1"/>
</dbReference>
<dbReference type="SUPFAM" id="SSF46589">
    <property type="entry name" value="tRNA-binding arm"/>
    <property type="match status" value="1"/>
</dbReference>
<dbReference type="PROSITE" id="PS50862">
    <property type="entry name" value="AA_TRNA_LIGASE_II"/>
    <property type="match status" value="1"/>
</dbReference>
<keyword id="KW-0002">3D-structure</keyword>
<keyword id="KW-0030">Aminoacyl-tRNA synthetase</keyword>
<keyword id="KW-0067">ATP-binding</keyword>
<keyword id="KW-0963">Cytoplasm</keyword>
<keyword id="KW-0436">Ligase</keyword>
<keyword id="KW-0547">Nucleotide-binding</keyword>
<keyword id="KW-0648">Protein biosynthesis</keyword>
<keyword id="KW-1185">Reference proteome</keyword>
<organism>
    <name type="scientific">Escherichia coli (strain K12)</name>
    <dbReference type="NCBI Taxonomy" id="83333"/>
    <lineage>
        <taxon>Bacteria</taxon>
        <taxon>Pseudomonadati</taxon>
        <taxon>Pseudomonadota</taxon>
        <taxon>Gammaproteobacteria</taxon>
        <taxon>Enterobacterales</taxon>
        <taxon>Enterobacteriaceae</taxon>
        <taxon>Escherichia</taxon>
    </lineage>
</organism>
<proteinExistence type="evidence at protein level"/>
<gene>
    <name type="primary">serS</name>
    <name type="ordered locus">b0893</name>
    <name type="ordered locus">JW0876</name>
</gene>
<reference key="1">
    <citation type="journal article" date="1987" name="Nucleic Acids Res.">
        <title>Cloning and characterization of the gene for Escherichia coli seryl-tRNA synthetase.</title>
        <authorList>
            <person name="Haertlein M."/>
            <person name="Madern D."/>
            <person name="Leberman R."/>
        </authorList>
    </citation>
    <scope>NUCLEOTIDE SEQUENCE [GENOMIC DNA]</scope>
    <source>
        <strain>K12</strain>
    </source>
</reference>
<reference key="2">
    <citation type="journal article" date="1996" name="DNA Res.">
        <title>A 718-kb DNA sequence of the Escherichia coli K-12 genome corresponding to the 12.7-28.0 min region on the linkage map.</title>
        <authorList>
            <person name="Oshima T."/>
            <person name="Aiba H."/>
            <person name="Baba T."/>
            <person name="Fujita K."/>
            <person name="Hayashi K."/>
            <person name="Honjo A."/>
            <person name="Ikemoto K."/>
            <person name="Inada T."/>
            <person name="Itoh T."/>
            <person name="Kajihara M."/>
            <person name="Kanai K."/>
            <person name="Kashimoto K."/>
            <person name="Kimura S."/>
            <person name="Kitagawa M."/>
            <person name="Makino K."/>
            <person name="Masuda S."/>
            <person name="Miki T."/>
            <person name="Mizobuchi K."/>
            <person name="Mori H."/>
            <person name="Motomura K."/>
            <person name="Nakamura Y."/>
            <person name="Nashimoto H."/>
            <person name="Nishio Y."/>
            <person name="Saito N."/>
            <person name="Sampei G."/>
            <person name="Seki Y."/>
            <person name="Tagami H."/>
            <person name="Takemoto K."/>
            <person name="Wada C."/>
            <person name="Yamamoto Y."/>
            <person name="Yano M."/>
            <person name="Horiuchi T."/>
        </authorList>
    </citation>
    <scope>NUCLEOTIDE SEQUENCE [LARGE SCALE GENOMIC DNA]</scope>
    <source>
        <strain>K12 / W3110 / ATCC 27325 / DSM 5911</strain>
    </source>
</reference>
<reference key="3">
    <citation type="journal article" date="1997" name="Science">
        <title>The complete genome sequence of Escherichia coli K-12.</title>
        <authorList>
            <person name="Blattner F.R."/>
            <person name="Plunkett G. III"/>
            <person name="Bloch C.A."/>
            <person name="Perna N.T."/>
            <person name="Burland V."/>
            <person name="Riley M."/>
            <person name="Collado-Vides J."/>
            <person name="Glasner J.D."/>
            <person name="Rode C.K."/>
            <person name="Mayhew G.F."/>
            <person name="Gregor J."/>
            <person name="Davis N.W."/>
            <person name="Kirkpatrick H.A."/>
            <person name="Goeden M.A."/>
            <person name="Rose D.J."/>
            <person name="Mau B."/>
            <person name="Shao Y."/>
        </authorList>
    </citation>
    <scope>NUCLEOTIDE SEQUENCE [LARGE SCALE GENOMIC DNA]</scope>
    <source>
        <strain>K12 / MG1655 / ATCC 47076</strain>
    </source>
</reference>
<reference key="4">
    <citation type="journal article" date="2006" name="Mol. Syst. Biol.">
        <title>Highly accurate genome sequences of Escherichia coli K-12 strains MG1655 and W3110.</title>
        <authorList>
            <person name="Hayashi K."/>
            <person name="Morooka N."/>
            <person name="Yamamoto Y."/>
            <person name="Fujita K."/>
            <person name="Isono K."/>
            <person name="Choi S."/>
            <person name="Ohtsubo E."/>
            <person name="Baba T."/>
            <person name="Wanner B.L."/>
            <person name="Mori H."/>
            <person name="Horiuchi T."/>
        </authorList>
    </citation>
    <scope>NUCLEOTIDE SEQUENCE [LARGE SCALE GENOMIC DNA]</scope>
    <source>
        <strain>K12 / W3110 / ATCC 27325 / DSM 5911</strain>
    </source>
</reference>
<reference key="5">
    <citation type="journal article" date="1988" name="Mol. Microbiol.">
        <title>Nucleotide sequence of the dmsABC operon encoding the anaerobic dimethylsulphoxide reductase of Escherichia coli.</title>
        <authorList>
            <person name="Bilous P.T."/>
            <person name="Cole S.T."/>
            <person name="Anderson W.F."/>
            <person name="Weiner J.H."/>
        </authorList>
    </citation>
    <scope>NUCLEOTIDE SEQUENCE [GENOMIC DNA] OF 251-430</scope>
</reference>
<reference key="6">
    <citation type="journal article" date="1988" name="Nature">
        <title>Gene for a novel tRNA species that accepts L-serine and cotranslationally inserts selenocysteine.</title>
        <authorList>
            <person name="Leinfelder W."/>
            <person name="Zehelein E."/>
            <person name="Mandrand-Berthelot M.A."/>
            <person name="Boeck A."/>
        </authorList>
    </citation>
    <scope>FUNCTION AS A SERYL-TRNA(SEC) SYNTHETASE</scope>
</reference>
<reference key="7">
    <citation type="journal article" date="1991" name="Biochim. Biophys. Acta">
        <title>Escherichia coli seryl-tRNA synthetase: the structure of a class 2 aminoacyl-tRNA synthetase.</title>
        <authorList>
            <person name="Leberman R."/>
            <person name="Haertlein M."/>
            <person name="Cusack S."/>
        </authorList>
    </citation>
    <scope>REVIEW</scope>
</reference>
<reference key="8">
    <citation type="journal article" date="1993" name="FEBS Lett.">
        <title>Crystallization of the seryl-tRNA synthetase:tRNA(Ser) complex of Escherichia coli.</title>
        <authorList>
            <person name="Price S."/>
            <person name="Cusack S."/>
            <person name="Borel F."/>
            <person name="Berthet-Colominas C."/>
            <person name="Leberman R."/>
        </authorList>
    </citation>
    <scope>SUBUNIT</scope>
    <scope>DOMAIN</scope>
    <scope>CRYSTALLIZATION</scope>
</reference>
<reference key="9">
    <citation type="journal article" date="1994" name="Nucleic Acids Res.">
        <title>Seryl-tRNA synthetase from Escherichia coli: implication of its N-terminal domain in aminoacylation activity and specificity.</title>
        <authorList>
            <person name="Borel F."/>
            <person name="Vincent C."/>
            <person name="Leberman R."/>
            <person name="Haertlein M."/>
        </authorList>
    </citation>
    <scope>FUNCTION</scope>
    <scope>KINETIC PARAMETERS</scope>
    <scope>DOMAIN</scope>
</reference>
<reference key="10">
    <citation type="journal article" date="1995" name="Nucleic Acids Res.">
        <title>Seryl-tRNA synthetase from Escherichia coli: functional evidence for cross-dimer tRNA binding during aminoacylation.</title>
        <authorList>
            <person name="Vincent C."/>
            <person name="Borel F."/>
            <person name="Willison J.C."/>
            <person name="Leberman R."/>
            <person name="Haertlein M."/>
        </authorList>
    </citation>
    <scope>FUNCTION</scope>
    <scope>KINETIC PARAMETERS</scope>
    <scope>MUTAGENESIS OF GLU-355</scope>
    <scope>SUBUNIT</scope>
    <scope>REACTION MECHANISM</scope>
    <scope>CATALYTIC ACTIVITY</scope>
    <scope>DOMAIN</scope>
</reference>
<reference key="11">
    <citation type="journal article" date="1997" name="Electrophoresis">
        <title>Escherichia coli proteome analysis using the gene-protein database.</title>
        <authorList>
            <person name="VanBogelen R.A."/>
            <person name="Abshire K.Z."/>
            <person name="Moldover B."/>
            <person name="Olson E.R."/>
            <person name="Neidhardt F.C."/>
        </authorList>
    </citation>
    <scope>IDENTIFICATION BY 2D-GEL</scope>
</reference>
<reference key="12">
    <citation type="journal article" date="1990" name="Nature">
        <title>A second class of synthetase structure revealed by X-ray analysis of Escherichia coli seryl-tRNA synthetase at 2.5 A.</title>
        <authorList>
            <person name="Cusack S."/>
            <person name="Berthet-Colominas C."/>
            <person name="Haertlein M."/>
            <person name="Nassar N."/>
            <person name="Leberman R."/>
        </authorList>
    </citation>
    <scope>X-RAY CRYSTALLOGRAPHY (2.5 ANGSTROMS)</scope>
</reference>
<name>SYS_ECOLI</name>
<comment type="function">
    <text evidence="2 3 4">Catalyzes the attachment of serine to tRNA(Ser) (PubMed:7537870). Is also able to aminoacylate tRNA(Sec) with serine, to form the misacylated tRNA L-seryl-tRNA(Sec), which will be further converted into selenocysteinyl-tRNA(Sec).</text>
</comment>
<comment type="catalytic activity">
    <reaction>
        <text>tRNA(Ser) + L-serine + ATP = L-seryl-tRNA(Ser) + AMP + diphosphate + H(+)</text>
        <dbReference type="Rhea" id="RHEA:12292"/>
        <dbReference type="Rhea" id="RHEA-COMP:9669"/>
        <dbReference type="Rhea" id="RHEA-COMP:9703"/>
        <dbReference type="ChEBI" id="CHEBI:15378"/>
        <dbReference type="ChEBI" id="CHEBI:30616"/>
        <dbReference type="ChEBI" id="CHEBI:33019"/>
        <dbReference type="ChEBI" id="CHEBI:33384"/>
        <dbReference type="ChEBI" id="CHEBI:78442"/>
        <dbReference type="ChEBI" id="CHEBI:78533"/>
        <dbReference type="ChEBI" id="CHEBI:456215"/>
        <dbReference type="EC" id="6.1.1.11"/>
    </reaction>
</comment>
<comment type="catalytic activity">
    <reaction evidence="3">
        <text>tRNA(Sec) + L-serine + ATP = L-seryl-tRNA(Sec) + AMP + diphosphate + H(+)</text>
        <dbReference type="Rhea" id="RHEA:42580"/>
        <dbReference type="Rhea" id="RHEA-COMP:9742"/>
        <dbReference type="Rhea" id="RHEA-COMP:10128"/>
        <dbReference type="ChEBI" id="CHEBI:15378"/>
        <dbReference type="ChEBI" id="CHEBI:30616"/>
        <dbReference type="ChEBI" id="CHEBI:33019"/>
        <dbReference type="ChEBI" id="CHEBI:33384"/>
        <dbReference type="ChEBI" id="CHEBI:78442"/>
        <dbReference type="ChEBI" id="CHEBI:78533"/>
        <dbReference type="ChEBI" id="CHEBI:456215"/>
        <dbReference type="EC" id="6.1.1.11"/>
    </reaction>
</comment>
<comment type="biophysicochemical properties">
    <kinetics>
        <KM evidence="3 4">64 uM for serine</KM>
        <KM evidence="3 4">0.068 uM for ATP</KM>
    </kinetics>
</comment>
<comment type="pathway">
    <text>Aminoacyl-tRNA biosynthesis; selenocysteinyl-tRNA(Sec) biosynthesis; L-seryl-tRNA(Sec) from L-serine and tRNA(Sec): step 1/1.</text>
</comment>
<comment type="subunit">
    <text evidence="3 5">Homodimer (PubMed:7537870). The tRNA molecule binds across the dimer, one part binds the N-terminus of the first SerRS subunit and the other part to the active site of the second subunit (PubMed:7537870).</text>
</comment>
<comment type="interaction">
    <interactant intactId="EBI-548422">
        <id>P0A8L1</id>
    </interactant>
    <interactant intactId="EBI-548422">
        <id>P0A8L1</id>
        <label>serS</label>
    </interactant>
    <organismsDiffer>false</organismsDiffer>
    <experiments>3</experiments>
</comment>
<comment type="subcellular location">
    <subcellularLocation>
        <location evidence="1">Cytoplasm</location>
    </subcellularLocation>
</comment>
<comment type="domain">
    <text evidence="3 4 5">Consists of two distinct domains, a catalytic core and a N-terminal extension that is involved in tRNA binding.</text>
</comment>
<comment type="similarity">
    <text evidence="6">Belongs to the class-II aminoacyl-tRNA synthetase family. Type-1 seryl-tRNA synthetase subfamily.</text>
</comment>
<feature type="chain" id="PRO_0000122044" description="Serine--tRNA ligase">
    <location>
        <begin position="1"/>
        <end position="430"/>
    </location>
</feature>
<feature type="binding site" evidence="1">
    <location>
        <begin position="237"/>
        <end position="239"/>
    </location>
    <ligand>
        <name>L-serine</name>
        <dbReference type="ChEBI" id="CHEBI:33384"/>
    </ligand>
</feature>
<feature type="binding site" evidence="1">
    <location>
        <begin position="268"/>
        <end position="270"/>
    </location>
    <ligand>
        <name>ATP</name>
        <dbReference type="ChEBI" id="CHEBI:30616"/>
    </ligand>
</feature>
<feature type="binding site" evidence="1">
    <location>
        <position position="291"/>
    </location>
    <ligand>
        <name>L-serine</name>
        <dbReference type="ChEBI" id="CHEBI:33384"/>
    </ligand>
</feature>
<feature type="binding site" evidence="1">
    <location>
        <begin position="355"/>
        <end position="358"/>
    </location>
    <ligand>
        <name>ATP</name>
        <dbReference type="ChEBI" id="CHEBI:30616"/>
    </ligand>
</feature>
<feature type="binding site" evidence="1">
    <location>
        <position position="391"/>
    </location>
    <ligand>
        <name>L-serine</name>
        <dbReference type="ChEBI" id="CHEBI:33384"/>
    </ligand>
</feature>
<feature type="mutagenesis site" description="Loss of serine activation activity." evidence="3">
    <original>E</original>
    <variation>Q</variation>
    <location>
        <position position="355"/>
    </location>
</feature>
<feature type="helix" evidence="7">
    <location>
        <begin position="4"/>
        <end position="9"/>
    </location>
</feature>
<feature type="helix" evidence="7">
    <location>
        <begin position="11"/>
        <end position="19"/>
    </location>
</feature>
<feature type="turn" evidence="7">
    <location>
        <begin position="20"/>
        <end position="22"/>
    </location>
</feature>
<feature type="helix" evidence="7">
    <location>
        <begin position="27"/>
        <end position="64"/>
    </location>
</feature>
<feature type="helix" evidence="7">
    <location>
        <begin position="69"/>
        <end position="100"/>
    </location>
</feature>
<feature type="helix" evidence="7">
    <location>
        <begin position="117"/>
        <end position="119"/>
    </location>
</feature>
<feature type="strand" evidence="7">
    <location>
        <begin position="121"/>
        <end position="127"/>
    </location>
</feature>
<feature type="helix" evidence="7">
    <location>
        <begin position="139"/>
        <end position="145"/>
    </location>
</feature>
<feature type="helix" evidence="7">
    <location>
        <begin position="151"/>
        <end position="157"/>
    </location>
</feature>
<feature type="strand" evidence="7">
    <location>
        <begin position="164"/>
        <end position="166"/>
    </location>
</feature>
<feature type="helix" evidence="7">
    <location>
        <begin position="167"/>
        <end position="187"/>
    </location>
</feature>
<feature type="strand" evidence="7">
    <location>
        <begin position="191"/>
        <end position="194"/>
    </location>
</feature>
<feature type="strand" evidence="7">
    <location>
        <begin position="197"/>
        <end position="199"/>
    </location>
</feature>
<feature type="helix" evidence="7">
    <location>
        <begin position="201"/>
        <end position="206"/>
    </location>
</feature>
<feature type="turn" evidence="7">
    <location>
        <begin position="210"/>
        <end position="213"/>
    </location>
</feature>
<feature type="helix" evidence="7">
    <location>
        <begin position="214"/>
        <end position="216"/>
    </location>
</feature>
<feature type="helix" evidence="7">
    <location>
        <begin position="224"/>
        <end position="226"/>
    </location>
</feature>
<feature type="turn" evidence="7">
    <location>
        <begin position="227"/>
        <end position="229"/>
    </location>
</feature>
<feature type="strand" evidence="7">
    <location>
        <begin position="232"/>
        <end position="234"/>
    </location>
</feature>
<feature type="helix" evidence="7">
    <location>
        <begin position="239"/>
        <end position="243"/>
    </location>
</feature>
<feature type="helix" evidence="7">
    <location>
        <begin position="244"/>
        <end position="246"/>
    </location>
</feature>
<feature type="strand" evidence="7">
    <location>
        <begin position="250"/>
        <end position="252"/>
    </location>
</feature>
<feature type="helix" evidence="7">
    <location>
        <begin position="253"/>
        <end position="255"/>
    </location>
</feature>
<feature type="strand" evidence="7">
    <location>
        <begin position="258"/>
        <end position="267"/>
    </location>
</feature>
<feature type="strand" evidence="7">
    <location>
        <begin position="279"/>
        <end position="283"/>
    </location>
</feature>
<feature type="strand" evidence="7">
    <location>
        <begin position="285"/>
        <end position="296"/>
    </location>
</feature>
<feature type="helix" evidence="7">
    <location>
        <begin position="298"/>
        <end position="300"/>
    </location>
</feature>
<feature type="helix" evidence="7">
    <location>
        <begin position="301"/>
        <end position="318"/>
    </location>
</feature>
<feature type="strand" evidence="7">
    <location>
        <begin position="323"/>
        <end position="327"/>
    </location>
</feature>
<feature type="helix" evidence="7">
    <location>
        <begin position="330"/>
        <end position="332"/>
    </location>
</feature>
<feature type="strand" evidence="7">
    <location>
        <begin position="338"/>
        <end position="347"/>
    </location>
</feature>
<feature type="helix" evidence="7">
    <location>
        <begin position="348"/>
        <end position="350"/>
    </location>
</feature>
<feature type="strand" evidence="7">
    <location>
        <begin position="352"/>
        <end position="361"/>
    </location>
</feature>
<feature type="helix" evidence="7">
    <location>
        <begin position="365"/>
        <end position="370"/>
    </location>
</feature>
<feature type="strand" evidence="7">
    <location>
        <begin position="373"/>
        <end position="375"/>
    </location>
</feature>
<feature type="strand" evidence="7">
    <location>
        <begin position="382"/>
        <end position="384"/>
    </location>
</feature>
<feature type="strand" evidence="7">
    <location>
        <begin position="386"/>
        <end position="394"/>
    </location>
</feature>
<feature type="helix" evidence="7">
    <location>
        <begin position="395"/>
        <end position="405"/>
    </location>
</feature>
<feature type="helix" evidence="7">
    <location>
        <begin position="417"/>
        <end position="422"/>
    </location>
</feature>
<feature type="turn" evidence="7">
    <location>
        <begin position="423"/>
        <end position="425"/>
    </location>
</feature>
<protein>
    <recommendedName>
        <fullName>Serine--tRNA ligase</fullName>
        <ecNumber evidence="3">6.1.1.11</ecNumber>
    </recommendedName>
    <alternativeName>
        <fullName>Seryl-tRNA synthetase</fullName>
        <shortName>SerRS</shortName>
    </alternativeName>
    <alternativeName>
        <fullName>Seryl-tRNA(Ser/Sec) synthetase</fullName>
    </alternativeName>
</protein>
<evidence type="ECO:0000250" key="1"/>
<evidence type="ECO:0000269" key="2">
    <source>
    </source>
</evidence>
<evidence type="ECO:0000269" key="3">
    <source>
    </source>
</evidence>
<evidence type="ECO:0000269" key="4">
    <source>
    </source>
</evidence>
<evidence type="ECO:0000269" key="5">
    <source>
    </source>
</evidence>
<evidence type="ECO:0000305" key="6"/>
<evidence type="ECO:0007829" key="7">
    <source>
        <dbReference type="PDB" id="6R1M"/>
    </source>
</evidence>
<accession>P0A8L1</accession>
<accession>P09156</accession>
<sequence>MLDPNLLRNEPDAVAEKLARRGFKLDVDKLGALEERRKVLQVKTENLQAERNSRSKSIGQAKARGEDIEPLRLEVNKLGEELDAAKAELDALQAEIRDIALTIPNLPADEVPVGKDENDNVEVSRWGTPREFDFEVRDHVTLGEMHSGLDFAAAVKLTGSRFVVMKGQIARMHRALSQFMLDLHTEQHGYSENYVPYLVNQDTLYGTGQLPKFAGDLFHTRPLEEEADTSNYALIPTAEVPLTNLVRGEIIDEDDLPIKMTAHTPCFRSEAGSYGRDTRGLIRMHQFDKVEMVQIVRPEDSMAALEEMTGHAEKVLQLLGLPYRKIILCTGDMGFGACKTYDLEVWIPAQNTYREISSCSNVWDFQARRMQARCRSKSDKKTRLVHTLNGSGLAVGRTLVAVMENYQQADGRIEVPEVLRPYMNGLEYIG</sequence>